<sequence length="406" mass="44881">MSVLSGLASEPRTPLSSKARMKRLPRKSQNEKYRLKYLRLRRAAKATVFENASICDEIARLEEKFLKAKEERRYLLKKLLQIHALTEGEPQAAAPSHSSSLPLPYGVTSSVGTMQGAGPSTGAEEPFAKKSKKEKKEKGKENSKLEVLKKTSKKKKMEGGARKLVRPIALDPSGQPVFPIGLGGLTVYSLGEIITNRPGFHDENAIYPVGYCSTRVYASMKCPDQKCLYTCQIKDGGVQPQFEIVPEDDPQNTIVGSSADACYEELLRAISATTGKLMPNPLSCGADFFGFSHPTIHNLIQSCPEAQNCVNYQWVKFDACKPRKGQLSQELPENDATMSLEAFQTQTFDDDHDDSILPGSLDLPELQHEAFVSSYQPEFLTHEPLVDTDLQHLKSPSQCSPIQSSD</sequence>
<accession>Q3UB74</accession>
<accession>Q3TLE7</accession>
<accession>Q3UCG2</accession>
<accession>Q3YBR3</accession>
<accession>Q6P067</accession>
<accession>Q80XA1</accession>
<accession>Q8CGC5</accession>
<organism>
    <name type="scientific">Mus musculus</name>
    <name type="common">Mouse</name>
    <dbReference type="NCBI Taxonomy" id="10090"/>
    <lineage>
        <taxon>Eukaryota</taxon>
        <taxon>Metazoa</taxon>
        <taxon>Chordata</taxon>
        <taxon>Craniata</taxon>
        <taxon>Vertebrata</taxon>
        <taxon>Euteleostomi</taxon>
        <taxon>Mammalia</taxon>
        <taxon>Eutheria</taxon>
        <taxon>Euarchontoglires</taxon>
        <taxon>Glires</taxon>
        <taxon>Rodentia</taxon>
        <taxon>Myomorpha</taxon>
        <taxon>Muroidea</taxon>
        <taxon>Muridae</taxon>
        <taxon>Murinae</taxon>
        <taxon>Mus</taxon>
        <taxon>Mus</taxon>
    </lineage>
</organism>
<keyword id="KW-0007">Acetylation</keyword>
<keyword id="KW-0131">Cell cycle</keyword>
<keyword id="KW-0539">Nucleus</keyword>
<keyword id="KW-0597">Phosphoprotein</keyword>
<keyword id="KW-1185">Reference proteome</keyword>
<keyword id="KW-0043">Tumor suppressor</keyword>
<keyword id="KW-0832">Ubl conjugation</keyword>
<proteinExistence type="evidence at protein level"/>
<dbReference type="EMBL" id="DQ144541">
    <property type="protein sequence ID" value="AAZ76015.1"/>
    <property type="molecule type" value="mRNA"/>
</dbReference>
<dbReference type="EMBL" id="AK150549">
    <property type="protein sequence ID" value="BAE29651.1"/>
    <property type="molecule type" value="mRNA"/>
</dbReference>
<dbReference type="EMBL" id="AK151075">
    <property type="protein sequence ID" value="BAE30090.1"/>
    <property type="molecule type" value="mRNA"/>
</dbReference>
<dbReference type="EMBL" id="AK151457">
    <property type="protein sequence ID" value="BAE30416.1"/>
    <property type="molecule type" value="mRNA"/>
</dbReference>
<dbReference type="EMBL" id="AK151209">
    <property type="protein sequence ID" value="BAE30204.1"/>
    <property type="molecule type" value="mRNA"/>
</dbReference>
<dbReference type="EMBL" id="AK166547">
    <property type="protein sequence ID" value="BAE38845.1"/>
    <property type="molecule type" value="mRNA"/>
</dbReference>
<dbReference type="EMBL" id="BC021331">
    <property type="protein sequence ID" value="AAH21331.1"/>
    <property type="status" value="ALT_INIT"/>
    <property type="molecule type" value="mRNA"/>
</dbReference>
<dbReference type="EMBL" id="BC040813">
    <property type="protein sequence ID" value="AAH40813.3"/>
    <property type="status" value="ALT_INIT"/>
    <property type="molecule type" value="mRNA"/>
</dbReference>
<dbReference type="EMBL" id="BC043022">
    <property type="protein sequence ID" value="AAH43022.3"/>
    <property type="status" value="ALT_INIT"/>
    <property type="molecule type" value="mRNA"/>
</dbReference>
<dbReference type="EMBL" id="BC065795">
    <property type="protein sequence ID" value="AAH65795.1"/>
    <property type="status" value="ALT_INIT"/>
    <property type="molecule type" value="mRNA"/>
</dbReference>
<dbReference type="CCDS" id="CCDS52771.1"/>
<dbReference type="RefSeq" id="NP_079565.2">
    <property type="nucleotide sequence ID" value="NM_025289.3"/>
</dbReference>
<dbReference type="SMR" id="Q3UB74"/>
<dbReference type="BioGRID" id="203980">
    <property type="interactions" value="6"/>
</dbReference>
<dbReference type="FunCoup" id="Q3UB74">
    <property type="interactions" value="3823"/>
</dbReference>
<dbReference type="IntAct" id="Q3UB74">
    <property type="interactions" value="1"/>
</dbReference>
<dbReference type="MINT" id="Q3UB74"/>
<dbReference type="STRING" id="10090.ENSMUSP00000112600"/>
<dbReference type="iPTMnet" id="Q3UB74"/>
<dbReference type="PhosphoSitePlus" id="Q3UB74"/>
<dbReference type="PaxDb" id="10090-ENSMUSP00000112600"/>
<dbReference type="PeptideAtlas" id="Q3UB74"/>
<dbReference type="ProteomicsDB" id="263013"/>
<dbReference type="Pumba" id="Q3UB74"/>
<dbReference type="Antibodypedia" id="45986">
    <property type="antibodies" value="139 antibodies from 24 providers"/>
</dbReference>
<dbReference type="DNASU" id="21376"/>
<dbReference type="Ensembl" id="ENSMUST00000117654.3">
    <property type="protein sequence ID" value="ENSMUSP00000112600.2"/>
    <property type="gene ID" value="ENSMUSG00000011114.19"/>
</dbReference>
<dbReference type="GeneID" id="21376"/>
<dbReference type="KEGG" id="mmu:21376"/>
<dbReference type="UCSC" id="uc009ovh.1">
    <property type="organism name" value="mouse"/>
</dbReference>
<dbReference type="AGR" id="MGI:1100877"/>
<dbReference type="CTD" id="84897"/>
<dbReference type="MGI" id="MGI:1100877">
    <property type="gene designation" value="Tbrg1"/>
</dbReference>
<dbReference type="VEuPathDB" id="HostDB:ENSMUSG00000011114"/>
<dbReference type="eggNOG" id="KOG4443">
    <property type="taxonomic scope" value="Eukaryota"/>
</dbReference>
<dbReference type="GeneTree" id="ENSGT00390000013374"/>
<dbReference type="HOGENOM" id="CLU_037126_0_0_1"/>
<dbReference type="InParanoid" id="Q3UB74"/>
<dbReference type="OMA" id="YYNDYHK"/>
<dbReference type="OrthoDB" id="285793at2759"/>
<dbReference type="PhylomeDB" id="Q3UB74"/>
<dbReference type="TreeFam" id="TF324736"/>
<dbReference type="BioGRID-ORCS" id="21376">
    <property type="hits" value="3 hits in 78 CRISPR screens"/>
</dbReference>
<dbReference type="ChiTaRS" id="Tbrg1">
    <property type="organism name" value="mouse"/>
</dbReference>
<dbReference type="PRO" id="PR:Q3UB74"/>
<dbReference type="Proteomes" id="UP000000589">
    <property type="component" value="Chromosome 9"/>
</dbReference>
<dbReference type="RNAct" id="Q3UB74">
    <property type="molecule type" value="protein"/>
</dbReference>
<dbReference type="Bgee" id="ENSMUSG00000011114">
    <property type="expression patterns" value="Expressed in ectoplacental cone and 281 other cell types or tissues"/>
</dbReference>
<dbReference type="ExpressionAtlas" id="Q3UB74">
    <property type="expression patterns" value="baseline and differential"/>
</dbReference>
<dbReference type="GO" id="GO:0005654">
    <property type="term" value="C:nucleoplasm"/>
    <property type="evidence" value="ECO:0007669"/>
    <property type="project" value="Ensembl"/>
</dbReference>
<dbReference type="GO" id="GO:0005634">
    <property type="term" value="C:nucleus"/>
    <property type="evidence" value="ECO:0000250"/>
    <property type="project" value="HGNC-UCL"/>
</dbReference>
<dbReference type="GO" id="GO:0006260">
    <property type="term" value="P:DNA replication"/>
    <property type="evidence" value="ECO:0000250"/>
    <property type="project" value="HGNC-UCL"/>
</dbReference>
<dbReference type="GO" id="GO:0008285">
    <property type="term" value="P:negative regulation of cell population proliferation"/>
    <property type="evidence" value="ECO:0000250"/>
    <property type="project" value="HGNC-UCL"/>
</dbReference>
<dbReference type="GO" id="GO:1990173">
    <property type="term" value="P:protein localization to nucleoplasm"/>
    <property type="evidence" value="ECO:0000250"/>
    <property type="project" value="HGNC-UCL"/>
</dbReference>
<dbReference type="GO" id="GO:0050821">
    <property type="term" value="P:protein stabilization"/>
    <property type="evidence" value="ECO:0000250"/>
    <property type="project" value="HGNC-UCL"/>
</dbReference>
<dbReference type="GO" id="GO:0051726">
    <property type="term" value="P:regulation of cell cycle"/>
    <property type="evidence" value="ECO:0000250"/>
    <property type="project" value="HGNC-UCL"/>
</dbReference>
<dbReference type="FunFam" id="3.30.160.360:FF:000007">
    <property type="entry name" value="Transforming growth factor beta regulator 1"/>
    <property type="match status" value="1"/>
</dbReference>
<dbReference type="Gene3D" id="3.30.160.360">
    <property type="match status" value="1"/>
</dbReference>
<dbReference type="InterPro" id="IPR003889">
    <property type="entry name" value="FYrich_C"/>
</dbReference>
<dbReference type="InterPro" id="IPR003888">
    <property type="entry name" value="FYrich_N"/>
</dbReference>
<dbReference type="InterPro" id="IPR040092">
    <property type="entry name" value="TBRG1"/>
</dbReference>
<dbReference type="PANTHER" id="PTHR22715">
    <property type="entry name" value="TRANSFORMING GROWTH FACTOR BETA REGULATED GENE 1"/>
    <property type="match status" value="1"/>
</dbReference>
<dbReference type="PANTHER" id="PTHR22715:SF0">
    <property type="entry name" value="TRANSFORMING GROWTH FACTOR BETA REGULATOR 1"/>
    <property type="match status" value="1"/>
</dbReference>
<dbReference type="Pfam" id="PF05965">
    <property type="entry name" value="FYRC"/>
    <property type="match status" value="1"/>
</dbReference>
<dbReference type="Pfam" id="PF05964">
    <property type="entry name" value="FYRN"/>
    <property type="match status" value="1"/>
</dbReference>
<dbReference type="SMART" id="SM00542">
    <property type="entry name" value="FYRC"/>
    <property type="match status" value="1"/>
</dbReference>
<dbReference type="SMART" id="SM00541">
    <property type="entry name" value="FYRN"/>
    <property type="match status" value="1"/>
</dbReference>
<dbReference type="PROSITE" id="PS51543">
    <property type="entry name" value="FYRC"/>
    <property type="match status" value="1"/>
</dbReference>
<dbReference type="PROSITE" id="PS51542">
    <property type="entry name" value="FYRN"/>
    <property type="match status" value="1"/>
</dbReference>
<reference key="1">
    <citation type="journal article" date="2007" name="J. Biol. Chem.">
        <title>A novel nuclear interactor of ARF and MDM2 (NIAM) that maintains chromosomal stability.</title>
        <authorList>
            <person name="Tompkins V.S."/>
            <person name="Hagen J."/>
            <person name="Frazier A.A."/>
            <person name="Lushnikova T."/>
            <person name="Fitzgerald M.P."/>
            <person name="di Tommaso A.D."/>
            <person name="Ladeveze V."/>
            <person name="Domann F.E."/>
            <person name="Eischen C.M."/>
            <person name="Quelle D.E."/>
        </authorList>
    </citation>
    <scope>NUCLEOTIDE SEQUENCE [MRNA]</scope>
    <scope>FUNCTION</scope>
    <scope>SUBCELLULAR LOCATION</scope>
    <scope>INTERACTION WITH CDKN2A AND MDM2</scope>
    <source>
        <tissue>Liver</tissue>
    </source>
</reference>
<reference key="2">
    <citation type="journal article" date="2005" name="Science">
        <title>The transcriptional landscape of the mammalian genome.</title>
        <authorList>
            <person name="Carninci P."/>
            <person name="Kasukawa T."/>
            <person name="Katayama S."/>
            <person name="Gough J."/>
            <person name="Frith M.C."/>
            <person name="Maeda N."/>
            <person name="Oyama R."/>
            <person name="Ravasi T."/>
            <person name="Lenhard B."/>
            <person name="Wells C."/>
            <person name="Kodzius R."/>
            <person name="Shimokawa K."/>
            <person name="Bajic V.B."/>
            <person name="Brenner S.E."/>
            <person name="Batalov S."/>
            <person name="Forrest A.R."/>
            <person name="Zavolan M."/>
            <person name="Davis M.J."/>
            <person name="Wilming L.G."/>
            <person name="Aidinis V."/>
            <person name="Allen J.E."/>
            <person name="Ambesi-Impiombato A."/>
            <person name="Apweiler R."/>
            <person name="Aturaliya R.N."/>
            <person name="Bailey T.L."/>
            <person name="Bansal M."/>
            <person name="Baxter L."/>
            <person name="Beisel K.W."/>
            <person name="Bersano T."/>
            <person name="Bono H."/>
            <person name="Chalk A.M."/>
            <person name="Chiu K.P."/>
            <person name="Choudhary V."/>
            <person name="Christoffels A."/>
            <person name="Clutterbuck D.R."/>
            <person name="Crowe M.L."/>
            <person name="Dalla E."/>
            <person name="Dalrymple B.P."/>
            <person name="de Bono B."/>
            <person name="Della Gatta G."/>
            <person name="di Bernardo D."/>
            <person name="Down T."/>
            <person name="Engstrom P."/>
            <person name="Fagiolini M."/>
            <person name="Faulkner G."/>
            <person name="Fletcher C.F."/>
            <person name="Fukushima T."/>
            <person name="Furuno M."/>
            <person name="Futaki S."/>
            <person name="Gariboldi M."/>
            <person name="Georgii-Hemming P."/>
            <person name="Gingeras T.R."/>
            <person name="Gojobori T."/>
            <person name="Green R.E."/>
            <person name="Gustincich S."/>
            <person name="Harbers M."/>
            <person name="Hayashi Y."/>
            <person name="Hensch T.K."/>
            <person name="Hirokawa N."/>
            <person name="Hill D."/>
            <person name="Huminiecki L."/>
            <person name="Iacono M."/>
            <person name="Ikeo K."/>
            <person name="Iwama A."/>
            <person name="Ishikawa T."/>
            <person name="Jakt M."/>
            <person name="Kanapin A."/>
            <person name="Katoh M."/>
            <person name="Kawasawa Y."/>
            <person name="Kelso J."/>
            <person name="Kitamura H."/>
            <person name="Kitano H."/>
            <person name="Kollias G."/>
            <person name="Krishnan S.P."/>
            <person name="Kruger A."/>
            <person name="Kummerfeld S.K."/>
            <person name="Kurochkin I.V."/>
            <person name="Lareau L.F."/>
            <person name="Lazarevic D."/>
            <person name="Lipovich L."/>
            <person name="Liu J."/>
            <person name="Liuni S."/>
            <person name="McWilliam S."/>
            <person name="Madan Babu M."/>
            <person name="Madera M."/>
            <person name="Marchionni L."/>
            <person name="Matsuda H."/>
            <person name="Matsuzawa S."/>
            <person name="Miki H."/>
            <person name="Mignone F."/>
            <person name="Miyake S."/>
            <person name="Morris K."/>
            <person name="Mottagui-Tabar S."/>
            <person name="Mulder N."/>
            <person name="Nakano N."/>
            <person name="Nakauchi H."/>
            <person name="Ng P."/>
            <person name="Nilsson R."/>
            <person name="Nishiguchi S."/>
            <person name="Nishikawa S."/>
            <person name="Nori F."/>
            <person name="Ohara O."/>
            <person name="Okazaki Y."/>
            <person name="Orlando V."/>
            <person name="Pang K.C."/>
            <person name="Pavan W.J."/>
            <person name="Pavesi G."/>
            <person name="Pesole G."/>
            <person name="Petrovsky N."/>
            <person name="Piazza S."/>
            <person name="Reed J."/>
            <person name="Reid J.F."/>
            <person name="Ring B.Z."/>
            <person name="Ringwald M."/>
            <person name="Rost B."/>
            <person name="Ruan Y."/>
            <person name="Salzberg S.L."/>
            <person name="Sandelin A."/>
            <person name="Schneider C."/>
            <person name="Schoenbach C."/>
            <person name="Sekiguchi K."/>
            <person name="Semple C.A."/>
            <person name="Seno S."/>
            <person name="Sessa L."/>
            <person name="Sheng Y."/>
            <person name="Shibata Y."/>
            <person name="Shimada H."/>
            <person name="Shimada K."/>
            <person name="Silva D."/>
            <person name="Sinclair B."/>
            <person name="Sperling S."/>
            <person name="Stupka E."/>
            <person name="Sugiura K."/>
            <person name="Sultana R."/>
            <person name="Takenaka Y."/>
            <person name="Taki K."/>
            <person name="Tammoja K."/>
            <person name="Tan S.L."/>
            <person name="Tang S."/>
            <person name="Taylor M.S."/>
            <person name="Tegner J."/>
            <person name="Teichmann S.A."/>
            <person name="Ueda H.R."/>
            <person name="van Nimwegen E."/>
            <person name="Verardo R."/>
            <person name="Wei C.L."/>
            <person name="Yagi K."/>
            <person name="Yamanishi H."/>
            <person name="Zabarovsky E."/>
            <person name="Zhu S."/>
            <person name="Zimmer A."/>
            <person name="Hide W."/>
            <person name="Bult C."/>
            <person name="Grimmond S.M."/>
            <person name="Teasdale R.D."/>
            <person name="Liu E.T."/>
            <person name="Brusic V."/>
            <person name="Quackenbush J."/>
            <person name="Wahlestedt C."/>
            <person name="Mattick J.S."/>
            <person name="Hume D.A."/>
            <person name="Kai C."/>
            <person name="Sasaki D."/>
            <person name="Tomaru Y."/>
            <person name="Fukuda S."/>
            <person name="Kanamori-Katayama M."/>
            <person name="Suzuki M."/>
            <person name="Aoki J."/>
            <person name="Arakawa T."/>
            <person name="Iida J."/>
            <person name="Imamura K."/>
            <person name="Itoh M."/>
            <person name="Kato T."/>
            <person name="Kawaji H."/>
            <person name="Kawagashira N."/>
            <person name="Kawashima T."/>
            <person name="Kojima M."/>
            <person name="Kondo S."/>
            <person name="Konno H."/>
            <person name="Nakano K."/>
            <person name="Ninomiya N."/>
            <person name="Nishio T."/>
            <person name="Okada M."/>
            <person name="Plessy C."/>
            <person name="Shibata K."/>
            <person name="Shiraki T."/>
            <person name="Suzuki S."/>
            <person name="Tagami M."/>
            <person name="Waki K."/>
            <person name="Watahiki A."/>
            <person name="Okamura-Oho Y."/>
            <person name="Suzuki H."/>
            <person name="Kawai J."/>
            <person name="Hayashizaki Y."/>
        </authorList>
    </citation>
    <scope>NUCLEOTIDE SEQUENCE [LARGE SCALE MRNA]</scope>
    <source>
        <strain>C57BL/6J</strain>
        <tissue>Bone marrow</tissue>
    </source>
</reference>
<reference key="3">
    <citation type="journal article" date="2004" name="Genome Res.">
        <title>The status, quality, and expansion of the NIH full-length cDNA project: the Mammalian Gene Collection (MGC).</title>
        <authorList>
            <consortium name="The MGC Project Team"/>
        </authorList>
    </citation>
    <scope>NUCLEOTIDE SEQUENCE [LARGE SCALE MRNA]</scope>
    <source>
        <strain>C57BL/6J</strain>
        <strain>FVB/N</strain>
        <strain>FVB/N-3</strain>
        <tissue>Brain</tissue>
        <tissue>Kidney</tissue>
        <tissue>Mammary gland</tissue>
        <tissue>Mammary tumor</tissue>
    </source>
</reference>
<reference key="4">
    <citation type="journal article" date="1995" name="Mol. Reprod. Dev.">
        <title>Modulation of gene expression in the preimplantation mouse embryo by TGF-alpha and TGF-beta.</title>
        <authorList>
            <person name="Babalola G.O."/>
            <person name="Schultz R.M."/>
        </authorList>
    </citation>
    <scope>INDUCTION</scope>
</reference>
<reference key="5">
    <citation type="journal article" date="2007" name="Proc. Natl. Acad. Sci. U.S.A.">
        <title>Large-scale phosphorylation analysis of mouse liver.</title>
        <authorList>
            <person name="Villen J."/>
            <person name="Beausoleil S.A."/>
            <person name="Gerber S.A."/>
            <person name="Gygi S.P."/>
        </authorList>
    </citation>
    <scope>ACETYLATION [LARGE SCALE ANALYSIS] AT SER-2</scope>
    <scope>PHOSPHORYLATION [LARGE SCALE ANALYSIS] AT THR-13</scope>
    <scope>CLEAVAGE OF INITIATOR METHIONINE [LARGE SCALE ANALYSIS]</scope>
    <scope>IDENTIFICATION BY MASS SPECTROMETRY [LARGE SCALE ANALYSIS]</scope>
    <source>
        <tissue>Liver</tissue>
    </source>
</reference>
<feature type="initiator methionine" description="Removed" evidence="8">
    <location>
        <position position="1"/>
    </location>
</feature>
<feature type="chain" id="PRO_0000274219" description="Transforming growth factor beta regulator 1">
    <location>
        <begin position="2"/>
        <end position="406"/>
    </location>
</feature>
<feature type="domain" description="FYR N-terminal" evidence="2">
    <location>
        <begin position="177"/>
        <end position="236"/>
    </location>
</feature>
<feature type="domain" description="FYR C-terminal" evidence="3">
    <location>
        <begin position="237"/>
        <end position="316"/>
    </location>
</feature>
<feature type="region of interest" description="Disordered" evidence="4">
    <location>
        <begin position="1"/>
        <end position="28"/>
    </location>
</feature>
<feature type="region of interest" description="Disordered" evidence="4">
    <location>
        <begin position="109"/>
        <end position="144"/>
    </location>
</feature>
<feature type="compositionally biased region" description="Basic and acidic residues" evidence="4">
    <location>
        <begin position="134"/>
        <end position="144"/>
    </location>
</feature>
<feature type="modified residue" description="N-acetylserine" evidence="8">
    <location>
        <position position="2"/>
    </location>
</feature>
<feature type="modified residue" description="Phosphothreonine" evidence="8">
    <location>
        <position position="13"/>
    </location>
</feature>
<feature type="sequence conflict" description="In Ref. 2; BAE29651." evidence="7" ref="2">
    <original>K</original>
    <variation>M</variation>
    <location>
        <position position="32"/>
    </location>
</feature>
<feature type="sequence conflict" description="In Ref. 2; BAE30090." evidence="7" ref="2">
    <original>I</original>
    <variation>T</variation>
    <location>
        <position position="180"/>
    </location>
</feature>
<feature type="sequence conflict" description="In Ref. 2; BAE30090." evidence="7" ref="2">
    <original>Y</original>
    <variation>C</variation>
    <location>
        <position position="188"/>
    </location>
</feature>
<feature type="sequence conflict" description="In Ref. 2; BAE29651." evidence="7" ref="2">
    <original>Y</original>
    <variation>N</variation>
    <location>
        <position position="207"/>
    </location>
</feature>
<feature type="sequence conflict" description="In Ref. 2; BAE30090." evidence="7" ref="2">
    <original>L</original>
    <variation>P</variation>
    <location>
        <position position="228"/>
    </location>
</feature>
<feature type="sequence conflict" description="In Ref. 2; BAE38845." evidence="7" ref="2">
    <original>S</original>
    <variation>G</variation>
    <location>
        <position position="271"/>
    </location>
</feature>
<feature type="sequence conflict" description="In Ref. 3; AAH43022." evidence="7" ref="3">
    <original>P</original>
    <variation>L</variation>
    <location>
        <position position="304"/>
    </location>
</feature>
<feature type="sequence conflict" description="In Ref. 2; BAE38845." evidence="7" ref="2">
    <original>H</original>
    <variation>Y</variation>
    <location>
        <position position="382"/>
    </location>
</feature>
<comment type="function">
    <text evidence="5">Acts as a growth inhibitor. Can activate p53/TP53, causes G1 arrest and collaborates with CDKN2A to restrict proliferation, but does not require either protein to inhibit DNA synthesis. Redistributes CDKN2A into the nucleoplasm. Involved in maintaining chromosomal stability.</text>
</comment>
<comment type="subunit">
    <text evidence="5">Interacts with CDKN2A and MDM2.</text>
</comment>
<comment type="subcellular location">
    <subcellularLocation>
        <location evidence="5">Nucleus</location>
    </subcellularLocation>
</comment>
<comment type="induction">
    <text evidence="6">Induced in cells undergoing arrest in response to DNA damage and TGFB1 treatment.</text>
</comment>
<comment type="PTM">
    <text evidence="1">Ubiquitinated; mediated by MDM2 and leading to its subsequent proteasomal degradation.</text>
</comment>
<comment type="similarity">
    <text evidence="7">Belongs to the TBRG1 family.</text>
</comment>
<comment type="sequence caution" evidence="7">
    <conflict type="erroneous initiation">
        <sequence resource="EMBL-CDS" id="AAH21331"/>
    </conflict>
</comment>
<comment type="sequence caution" evidence="7">
    <conflict type="erroneous initiation">
        <sequence resource="EMBL-CDS" id="AAH40813"/>
    </conflict>
</comment>
<comment type="sequence caution" evidence="7">
    <conflict type="erroneous initiation">
        <sequence resource="EMBL-CDS" id="AAH43022"/>
    </conflict>
</comment>
<comment type="sequence caution" evidence="7">
    <conflict type="erroneous initiation">
        <sequence resource="EMBL-CDS" id="AAH65795"/>
    </conflict>
</comment>
<protein>
    <recommendedName>
        <fullName>Transforming growth factor beta regulator 1</fullName>
    </recommendedName>
    <alternativeName>
        <fullName>Nuclear interactor of ARF and Mdm2</fullName>
    </alternativeName>
</protein>
<gene>
    <name type="primary">Tbrg1</name>
    <name type="synonym">Niam</name>
</gene>
<evidence type="ECO:0000250" key="1"/>
<evidence type="ECO:0000255" key="2">
    <source>
        <dbReference type="PROSITE-ProRule" id="PRU00875"/>
    </source>
</evidence>
<evidence type="ECO:0000255" key="3">
    <source>
        <dbReference type="PROSITE-ProRule" id="PRU00876"/>
    </source>
</evidence>
<evidence type="ECO:0000256" key="4">
    <source>
        <dbReference type="SAM" id="MobiDB-lite"/>
    </source>
</evidence>
<evidence type="ECO:0000269" key="5">
    <source>
    </source>
</evidence>
<evidence type="ECO:0000269" key="6">
    <source>
    </source>
</evidence>
<evidence type="ECO:0000305" key="7"/>
<evidence type="ECO:0007744" key="8">
    <source>
    </source>
</evidence>
<name>TBRG1_MOUSE</name>